<protein>
    <recommendedName>
        <fullName evidence="14">ABC transporter G family member 37</fullName>
        <shortName evidence="14">ABC transporter ABCG.37</shortName>
        <shortName evidence="14">AtABCG37</shortName>
    </recommendedName>
    <alternativeName>
        <fullName evidence="11 12 13">Pleiotropic drug resistance protein 9</fullName>
    </alternativeName>
    <alternativeName>
        <fullName evidence="13">Protein ENHANCER OF TIR1-1 AUXIN RESISTANCE 4</fullName>
    </alternativeName>
    <alternativeName>
        <fullName evidence="15">Protein POLAR AUXIN TRANSPORT INHIBITOR SENSITIVE 1</fullName>
    </alternativeName>
</protein>
<dbReference type="EMBL" id="AL132966">
    <property type="protein sequence ID" value="CAB67655.1"/>
    <property type="molecule type" value="Genomic_DNA"/>
</dbReference>
<dbReference type="EMBL" id="CP002686">
    <property type="protein sequence ID" value="AEE79095.1"/>
    <property type="molecule type" value="Genomic_DNA"/>
</dbReference>
<dbReference type="EMBL" id="BK001008">
    <property type="protein sequence ID" value="DAA00877.1"/>
    <property type="molecule type" value="Genomic_DNA"/>
</dbReference>
<dbReference type="PIR" id="T45888">
    <property type="entry name" value="T45888"/>
</dbReference>
<dbReference type="RefSeq" id="NP_190916.1">
    <property type="nucleotide sequence ID" value="NM_115208.4"/>
</dbReference>
<dbReference type="SMR" id="Q9LFH0"/>
<dbReference type="BioGRID" id="9833">
    <property type="interactions" value="2"/>
</dbReference>
<dbReference type="FunCoup" id="Q9LFH0">
    <property type="interactions" value="274"/>
</dbReference>
<dbReference type="STRING" id="3702.Q9LFH0"/>
<dbReference type="TCDB" id="3.A.1.205.29">
    <property type="family name" value="the atp-binding cassette (abc) superfamily"/>
</dbReference>
<dbReference type="GlyGen" id="Q9LFH0">
    <property type="glycosylation" value="1 site"/>
</dbReference>
<dbReference type="iPTMnet" id="Q9LFH0"/>
<dbReference type="PaxDb" id="3702-AT3G53480.1"/>
<dbReference type="ProteomicsDB" id="244337"/>
<dbReference type="EnsemblPlants" id="AT3G53480.1">
    <property type="protein sequence ID" value="AT3G53480.1"/>
    <property type="gene ID" value="AT3G53480"/>
</dbReference>
<dbReference type="GeneID" id="824516"/>
<dbReference type="Gramene" id="AT3G53480.1">
    <property type="protein sequence ID" value="AT3G53480.1"/>
    <property type="gene ID" value="AT3G53480"/>
</dbReference>
<dbReference type="KEGG" id="ath:AT3G53480"/>
<dbReference type="Araport" id="AT3G53480"/>
<dbReference type="TAIR" id="AT3G53480">
    <property type="gene designation" value="ABCG37"/>
</dbReference>
<dbReference type="eggNOG" id="KOG0065">
    <property type="taxonomic scope" value="Eukaryota"/>
</dbReference>
<dbReference type="HOGENOM" id="CLU_000604_35_6_1"/>
<dbReference type="InParanoid" id="Q9LFH0"/>
<dbReference type="OMA" id="WHDVCYE"/>
<dbReference type="PhylomeDB" id="Q9LFH0"/>
<dbReference type="PRO" id="PR:Q9LFH0"/>
<dbReference type="Proteomes" id="UP000006548">
    <property type="component" value="Chromosome 3"/>
</dbReference>
<dbReference type="ExpressionAtlas" id="Q9LFH0">
    <property type="expression patterns" value="baseline and differential"/>
</dbReference>
<dbReference type="GO" id="GO:0005886">
    <property type="term" value="C:plasma membrane"/>
    <property type="evidence" value="ECO:0000314"/>
    <property type="project" value="UniProtKB"/>
</dbReference>
<dbReference type="GO" id="GO:0009506">
    <property type="term" value="C:plasmodesma"/>
    <property type="evidence" value="ECO:0007005"/>
    <property type="project" value="TAIR"/>
</dbReference>
<dbReference type="GO" id="GO:0140359">
    <property type="term" value="F:ABC-type transporter activity"/>
    <property type="evidence" value="ECO:0007669"/>
    <property type="project" value="InterPro"/>
</dbReference>
<dbReference type="GO" id="GO:0005524">
    <property type="term" value="F:ATP binding"/>
    <property type="evidence" value="ECO:0007669"/>
    <property type="project" value="UniProtKB-KW"/>
</dbReference>
<dbReference type="GO" id="GO:0016887">
    <property type="term" value="F:ATP hydrolysis activity"/>
    <property type="evidence" value="ECO:0007669"/>
    <property type="project" value="InterPro"/>
</dbReference>
<dbReference type="GO" id="GO:0010329">
    <property type="term" value="F:auxin efflux transmembrane transporter activity"/>
    <property type="evidence" value="ECO:0000314"/>
    <property type="project" value="TAIR"/>
</dbReference>
<dbReference type="GO" id="GO:0015562">
    <property type="term" value="F:efflux transmembrane transporter activity"/>
    <property type="evidence" value="ECO:0000315"/>
    <property type="project" value="UniProtKB"/>
</dbReference>
<dbReference type="GO" id="GO:0018901">
    <property type="term" value="P:2,4-dichlorophenoxyacetic acid metabolic process"/>
    <property type="evidence" value="ECO:0000315"/>
    <property type="project" value="UniProtKB"/>
</dbReference>
<dbReference type="GO" id="GO:0009926">
    <property type="term" value="P:auxin polar transport"/>
    <property type="evidence" value="ECO:0000315"/>
    <property type="project" value="TAIR"/>
</dbReference>
<dbReference type="GO" id="GO:0009734">
    <property type="term" value="P:auxin-activated signaling pathway"/>
    <property type="evidence" value="ECO:0007669"/>
    <property type="project" value="UniProtKB-KW"/>
</dbReference>
<dbReference type="GO" id="GO:1990748">
    <property type="term" value="P:cellular detoxification"/>
    <property type="evidence" value="ECO:0000315"/>
    <property type="project" value="UniProtKB"/>
</dbReference>
<dbReference type="GO" id="GO:0071366">
    <property type="term" value="P:cellular response to indolebutyric acid stimulus"/>
    <property type="evidence" value="ECO:0000315"/>
    <property type="project" value="TAIR"/>
</dbReference>
<dbReference type="GO" id="GO:0009804">
    <property type="term" value="P:coumarin metabolic process"/>
    <property type="evidence" value="ECO:0000315"/>
    <property type="project" value="UniProtKB"/>
</dbReference>
<dbReference type="GO" id="GO:0140352">
    <property type="term" value="P:export from cell"/>
    <property type="evidence" value="ECO:0000315"/>
    <property type="project" value="UniProtKB"/>
</dbReference>
<dbReference type="GO" id="GO:0140964">
    <property type="term" value="P:intracellular auxin homeostasis"/>
    <property type="evidence" value="ECO:0000315"/>
    <property type="project" value="UniProtKB"/>
</dbReference>
<dbReference type="GO" id="GO:1990641">
    <property type="term" value="P:response to iron ion starvation"/>
    <property type="evidence" value="ECO:0000315"/>
    <property type="project" value="UniProtKB"/>
</dbReference>
<dbReference type="GO" id="GO:0048364">
    <property type="term" value="P:root development"/>
    <property type="evidence" value="ECO:0000315"/>
    <property type="project" value="TAIR"/>
</dbReference>
<dbReference type="GO" id="GO:0055085">
    <property type="term" value="P:transmembrane transport"/>
    <property type="evidence" value="ECO:0000315"/>
    <property type="project" value="UniProtKB"/>
</dbReference>
<dbReference type="CDD" id="cd03233">
    <property type="entry name" value="ABCG_PDR_domain1"/>
    <property type="match status" value="1"/>
</dbReference>
<dbReference type="CDD" id="cd03232">
    <property type="entry name" value="ABCG_PDR_domain2"/>
    <property type="match status" value="1"/>
</dbReference>
<dbReference type="FunFam" id="3.40.50.300:FF:000157">
    <property type="entry name" value="ABC transporter G family member 34"/>
    <property type="match status" value="1"/>
</dbReference>
<dbReference type="FunFam" id="3.40.50.300:FF:000179">
    <property type="entry name" value="ABC transporter G family member 34"/>
    <property type="match status" value="1"/>
</dbReference>
<dbReference type="Gene3D" id="3.40.50.300">
    <property type="entry name" value="P-loop containing nucleotide triphosphate hydrolases"/>
    <property type="match status" value="2"/>
</dbReference>
<dbReference type="InterPro" id="IPR003593">
    <property type="entry name" value="AAA+_ATPase"/>
</dbReference>
<dbReference type="InterPro" id="IPR013525">
    <property type="entry name" value="ABC2_TM"/>
</dbReference>
<dbReference type="InterPro" id="IPR003439">
    <property type="entry name" value="ABC_transporter-like_ATP-bd"/>
</dbReference>
<dbReference type="InterPro" id="IPR043926">
    <property type="entry name" value="ABCG_dom"/>
</dbReference>
<dbReference type="InterPro" id="IPR034001">
    <property type="entry name" value="ABCG_PDR_1"/>
</dbReference>
<dbReference type="InterPro" id="IPR034003">
    <property type="entry name" value="ABCG_PDR_2"/>
</dbReference>
<dbReference type="InterPro" id="IPR027417">
    <property type="entry name" value="P-loop_NTPase"/>
</dbReference>
<dbReference type="InterPro" id="IPR013581">
    <property type="entry name" value="PDR_assoc"/>
</dbReference>
<dbReference type="PANTHER" id="PTHR19241">
    <property type="entry name" value="ATP-BINDING CASSETTE TRANSPORTER"/>
    <property type="match status" value="1"/>
</dbReference>
<dbReference type="Pfam" id="PF01061">
    <property type="entry name" value="ABC2_membrane"/>
    <property type="match status" value="2"/>
</dbReference>
<dbReference type="Pfam" id="PF19055">
    <property type="entry name" value="ABC2_membrane_7"/>
    <property type="match status" value="2"/>
</dbReference>
<dbReference type="Pfam" id="PF00005">
    <property type="entry name" value="ABC_tran"/>
    <property type="match status" value="2"/>
</dbReference>
<dbReference type="Pfam" id="PF08370">
    <property type="entry name" value="PDR_assoc"/>
    <property type="match status" value="1"/>
</dbReference>
<dbReference type="SMART" id="SM00382">
    <property type="entry name" value="AAA"/>
    <property type="match status" value="2"/>
</dbReference>
<dbReference type="SUPFAM" id="SSF52540">
    <property type="entry name" value="P-loop containing nucleoside triphosphate hydrolases"/>
    <property type="match status" value="2"/>
</dbReference>
<dbReference type="PROSITE" id="PS50893">
    <property type="entry name" value="ABC_TRANSPORTER_2"/>
    <property type="match status" value="2"/>
</dbReference>
<comment type="function">
    <text evidence="1 6 8 9 10 16">Together with ABCG36, regulates auxin homeostasis and responses by playing a dual role in coumarin (and derivatives) and in the auxin precursor indole 3-butyric acid (IBA) efflux transport, thus influencing roots and root hairs development (PubMed:20498067, PubMed:24015802). Mediates coumarin exudation in the rhizosphere, especially in iron (Fe) deficient conditions, with a strong specificity for highly oxygenated compounds such as scopoletin and derivatives, dihydroxyscopoletin, esculetin, fraxin, fraxetin and esculin; these molecules improve plant Fe nutrition (PubMed:24015802, PubMed:26517905, PubMed:28623273). Involved in the cellular detoxification of xenobiotics by promoting the excretion of some auxinic herbicides including 2,4-dichlorophenoxyacetic acid (2,4-D), 4-(2,4-dichlorophenoxy)butyric acid (2,4-DB) and other members of the phenoxyalkanoic acid family as well as the polar auxin transport inhibitor, napthylphthalamic acid (NPA) (PubMed:16877699, PubMed:20498067, PubMed:24015802). May be a general defense protein (By similarity).</text>
</comment>
<comment type="subcellular location">
    <subcellularLocation>
        <location evidence="6 7 8">Cell membrane</location>
        <topology evidence="2">Multi-pass membrane protein</topology>
    </subcellularLocation>
    <text evidence="7 8">Polarized localization at the outermost side of root epidermal and cap cells.</text>
</comment>
<comment type="tissue specificity">
    <text evidence="5 6 8">Expressed in roots and, to a lower extent, in seedlings.</text>
</comment>
<comment type="developmental stage">
    <text evidence="6 8">In roots, mostly expressed in the cells of the lateral root cap and epidermal cells at the root tip (PubMed:16877699, PubMed:20498067). In shoots, confined to the stipules (PubMed:16877699).</text>
</comment>
<comment type="induction">
    <text evidence="5 9">Induced by cycloheximide (CHX) and cold/dark treatment (PubMed:12430018). Up-regulated in response to iron (Fe) deficiency (PubMed:24015802).</text>
</comment>
<comment type="disruption phenotype">
    <text evidence="6 8 9 10">Defects in efflux of the auxin precursor indole-3-butyric acid (IBA) associated with developmental defects such as abnormally long root hairs and increased lateral root production (PubMed:20498067). Strongly reduced coumarin (e.g. highly oxygenated compounds scopoletin, dihydroxyscopoletin, esculetin, fraxin, fraxetin and esculin) exudation in the rhizosphere, especially in iron (Fe) deficient conditions (PubMed:24015802, PubMed:28623273). Hypersensitivity to iron (Fe) deficiency (PubMed:24015802). Increased sensitivity to the auxinic herbicides 2,4-dichlorophenoxyacetic acid (2,4-D), 4-(2,4-dichlorophenoxy)butyric acid (2,4-DB) and 2-naphthoxyacetic acid (2-NOA), but normal responses to the endogenous auxins indole-3-acetic acid (IAA), phenylacetic acid (PAA) and indole-butyric acid (IBA) (PubMed:16877699, PubMed:20498067). Hypersensitivity to polar auxin transport inhibitors including napthylphthalamic acid (NPA), 1-naphthoxyacetic acid (1-NOA), 2-(1-pyrenoyl)benzoic acid (PBA) and 2,3,5-triiodobenzoic acid (TIBA) (PubMed:16877699, PubMed:20498067).</text>
</comment>
<comment type="similarity">
    <text evidence="17">Belongs to the ABC transporter superfamily. ABCG family. PDR (TC 3.A.1.205) subfamily.</text>
</comment>
<evidence type="ECO:0000250" key="1">
    <source>
        <dbReference type="UniProtKB" id="Q9XIE2"/>
    </source>
</evidence>
<evidence type="ECO:0000255" key="2"/>
<evidence type="ECO:0000255" key="3">
    <source>
        <dbReference type="PROSITE-ProRule" id="PRU00434"/>
    </source>
</evidence>
<evidence type="ECO:0000256" key="4">
    <source>
        <dbReference type="SAM" id="MobiDB-lite"/>
    </source>
</evidence>
<evidence type="ECO:0000269" key="5">
    <source>
    </source>
</evidence>
<evidence type="ECO:0000269" key="6">
    <source>
    </source>
</evidence>
<evidence type="ECO:0000269" key="7">
    <source>
    </source>
</evidence>
<evidence type="ECO:0000269" key="8">
    <source>
    </source>
</evidence>
<evidence type="ECO:0000269" key="9">
    <source>
    </source>
</evidence>
<evidence type="ECO:0000269" key="10">
    <source>
    </source>
</evidence>
<evidence type="ECO:0000303" key="11">
    <source>
    </source>
</evidence>
<evidence type="ECO:0000303" key="12">
    <source>
    </source>
</evidence>
<evidence type="ECO:0000303" key="13">
    <source>
    </source>
</evidence>
<evidence type="ECO:0000303" key="14">
    <source>
    </source>
</evidence>
<evidence type="ECO:0000303" key="15">
    <source>
    </source>
</evidence>
<evidence type="ECO:0000303" key="16">
    <source>
    </source>
</evidence>
<evidence type="ECO:0000305" key="17"/>
<evidence type="ECO:0000312" key="18">
    <source>
        <dbReference type="Araport" id="AT3G53480"/>
    </source>
</evidence>
<evidence type="ECO:0000312" key="19">
    <source>
        <dbReference type="EMBL" id="CAB67655.1"/>
    </source>
</evidence>
<reference key="1">
    <citation type="journal article" date="2000" name="Nature">
        <title>Sequence and analysis of chromosome 3 of the plant Arabidopsis thaliana.</title>
        <authorList>
            <person name="Salanoubat M."/>
            <person name="Lemcke K."/>
            <person name="Rieger M."/>
            <person name="Ansorge W."/>
            <person name="Unseld M."/>
            <person name="Fartmann B."/>
            <person name="Valle G."/>
            <person name="Bloecker H."/>
            <person name="Perez-Alonso M."/>
            <person name="Obermaier B."/>
            <person name="Delseny M."/>
            <person name="Boutry M."/>
            <person name="Grivell L.A."/>
            <person name="Mache R."/>
            <person name="Puigdomenech P."/>
            <person name="De Simone V."/>
            <person name="Choisne N."/>
            <person name="Artiguenave F."/>
            <person name="Robert C."/>
            <person name="Brottier P."/>
            <person name="Wincker P."/>
            <person name="Cattolico L."/>
            <person name="Weissenbach J."/>
            <person name="Saurin W."/>
            <person name="Quetier F."/>
            <person name="Schaefer M."/>
            <person name="Mueller-Auer S."/>
            <person name="Gabel C."/>
            <person name="Fuchs M."/>
            <person name="Benes V."/>
            <person name="Wurmbach E."/>
            <person name="Drzonek H."/>
            <person name="Erfle H."/>
            <person name="Jordan N."/>
            <person name="Bangert S."/>
            <person name="Wiedelmann R."/>
            <person name="Kranz H."/>
            <person name="Voss H."/>
            <person name="Holland R."/>
            <person name="Brandt P."/>
            <person name="Nyakatura G."/>
            <person name="Vezzi A."/>
            <person name="D'Angelo M."/>
            <person name="Pallavicini A."/>
            <person name="Toppo S."/>
            <person name="Simionati B."/>
            <person name="Conrad A."/>
            <person name="Hornischer K."/>
            <person name="Kauer G."/>
            <person name="Loehnert T.-H."/>
            <person name="Nordsiek G."/>
            <person name="Reichelt J."/>
            <person name="Scharfe M."/>
            <person name="Schoen O."/>
            <person name="Bargues M."/>
            <person name="Terol J."/>
            <person name="Climent J."/>
            <person name="Navarro P."/>
            <person name="Collado C."/>
            <person name="Perez-Perez A."/>
            <person name="Ottenwaelder B."/>
            <person name="Duchemin D."/>
            <person name="Cooke R."/>
            <person name="Laudie M."/>
            <person name="Berger-Llauro C."/>
            <person name="Purnelle B."/>
            <person name="Masuy D."/>
            <person name="de Haan M."/>
            <person name="Maarse A.C."/>
            <person name="Alcaraz J.-P."/>
            <person name="Cottet A."/>
            <person name="Casacuberta E."/>
            <person name="Monfort A."/>
            <person name="Argiriou A."/>
            <person name="Flores M."/>
            <person name="Liguori R."/>
            <person name="Vitale D."/>
            <person name="Mannhaupt G."/>
            <person name="Haase D."/>
            <person name="Schoof H."/>
            <person name="Rudd S."/>
            <person name="Zaccaria P."/>
            <person name="Mewes H.-W."/>
            <person name="Mayer K.F.X."/>
            <person name="Kaul S."/>
            <person name="Town C.D."/>
            <person name="Koo H.L."/>
            <person name="Tallon L.J."/>
            <person name="Jenkins J."/>
            <person name="Rooney T."/>
            <person name="Rizzo M."/>
            <person name="Walts A."/>
            <person name="Utterback T."/>
            <person name="Fujii C.Y."/>
            <person name="Shea T.P."/>
            <person name="Creasy T.H."/>
            <person name="Haas B."/>
            <person name="Maiti R."/>
            <person name="Wu D."/>
            <person name="Peterson J."/>
            <person name="Van Aken S."/>
            <person name="Pai G."/>
            <person name="Militscher J."/>
            <person name="Sellers P."/>
            <person name="Gill J.E."/>
            <person name="Feldblyum T.V."/>
            <person name="Preuss D."/>
            <person name="Lin X."/>
            <person name="Nierman W.C."/>
            <person name="Salzberg S.L."/>
            <person name="White O."/>
            <person name="Venter J.C."/>
            <person name="Fraser C.M."/>
            <person name="Kaneko T."/>
            <person name="Nakamura Y."/>
            <person name="Sato S."/>
            <person name="Kato T."/>
            <person name="Asamizu E."/>
            <person name="Sasamoto S."/>
            <person name="Kimura T."/>
            <person name="Idesawa K."/>
            <person name="Kawashima K."/>
            <person name="Kishida Y."/>
            <person name="Kiyokawa C."/>
            <person name="Kohara M."/>
            <person name="Matsumoto M."/>
            <person name="Matsuno A."/>
            <person name="Muraki A."/>
            <person name="Nakayama S."/>
            <person name="Nakazaki N."/>
            <person name="Shinpo S."/>
            <person name="Takeuchi C."/>
            <person name="Wada T."/>
            <person name="Watanabe A."/>
            <person name="Yamada M."/>
            <person name="Yasuda M."/>
            <person name="Tabata S."/>
        </authorList>
    </citation>
    <scope>NUCLEOTIDE SEQUENCE [LARGE SCALE GENOMIC DNA]</scope>
    <source>
        <strain>cv. Columbia</strain>
    </source>
</reference>
<reference key="2">
    <citation type="journal article" date="2017" name="Plant J.">
        <title>Araport11: a complete reannotation of the Arabidopsis thaliana reference genome.</title>
        <authorList>
            <person name="Cheng C.Y."/>
            <person name="Krishnakumar V."/>
            <person name="Chan A.P."/>
            <person name="Thibaud-Nissen F."/>
            <person name="Schobel S."/>
            <person name="Town C.D."/>
        </authorList>
    </citation>
    <scope>GENOME REANNOTATION</scope>
    <source>
        <strain>cv. Columbia</strain>
    </source>
</reference>
<reference key="3">
    <citation type="journal article" date="2002" name="Planta">
        <title>The plant PDR family of ABC transporters.</title>
        <authorList>
            <person name="van den Brule S."/>
            <person name="Smart C.C."/>
        </authorList>
    </citation>
    <scope>IDENTIFICATION</scope>
    <scope>TISSUE SPECIFICITY</scope>
    <scope>INDUCTION</scope>
</reference>
<reference key="4">
    <citation type="journal article" date="2006" name="FEBS Lett.">
        <title>Organization and function of the plant pleiotropic drug resistance ABC transporter family.</title>
        <authorList>
            <person name="Crouzet J."/>
            <person name="Trombik T."/>
            <person name="Fraysse A.S."/>
            <person name="Boutry M."/>
        </authorList>
    </citation>
    <scope>GENE FAMILY</scope>
    <scope>NOMENCLATURE</scope>
</reference>
<reference key="5">
    <citation type="journal article" date="2006" name="Plant Physiol.">
        <title>A gain-of-function mutation in the Arabidopsis pleiotropic drug resistance transporter PDR9 confers resistance to auxinic herbicides.</title>
        <authorList>
            <person name="Ito H."/>
            <person name="Gray W.M."/>
        </authorList>
    </citation>
    <scope>FUNCTION</scope>
    <scope>DISRUPTION PHENOTYPE</scope>
    <scope>MUTAGENESIS OF ALA-1034</scope>
    <scope>TISSUE SPECIFICITY</scope>
    <scope>DEVELOPMENTAL STAGE</scope>
    <scope>SUBCELLULAR LOCATION</scope>
    <source>
        <strain>cv. Columbia</strain>
    </source>
</reference>
<reference key="6">
    <citation type="journal article" date="2008" name="Trends Plant Sci.">
        <title>Plant ABC proteins - a unified nomenclature and updated inventory.</title>
        <authorList>
            <person name="Verrier P.J."/>
            <person name="Bird D."/>
            <person name="Burla B."/>
            <person name="Dassa E."/>
            <person name="Forestier C."/>
            <person name="Geisler M."/>
            <person name="Klein M."/>
            <person name="Kolukisaoglu H.U."/>
            <person name="Lee Y."/>
            <person name="Martinoia E."/>
            <person name="Murphy A."/>
            <person name="Rea P.A."/>
            <person name="Samuels L."/>
            <person name="Schulz B."/>
            <person name="Spalding E.J."/>
            <person name="Yazaki K."/>
            <person name="Theodoulou F.L."/>
        </authorList>
    </citation>
    <scope>GENE FAMILY</scope>
    <scope>NOMENCLATURE</scope>
</reference>
<reference key="7">
    <citation type="journal article" date="2010" name="Curr. Biol.">
        <title>Trafficking to the outer polar domain defines the root-soil interface.</title>
        <authorList>
            <person name="Langowski L."/>
            <person name="Ruzicka K."/>
            <person name="Naramoto S."/>
            <person name="Kleine-Vehn J."/>
            <person name="Friml J."/>
        </authorList>
    </citation>
    <scope>SUBCELLULAR LOCATION</scope>
</reference>
<reference key="8">
    <citation type="journal article" date="2010" name="Proc. Natl. Acad. Sci. U.S.A.">
        <title>Arabidopsis PIS1 encodes the ABCG37 transporter of auxinic compounds including the auxin precursor indole-3-butyric acid.</title>
        <authorList>
            <person name="Ruzicka K."/>
            <person name="Strader L.C."/>
            <person name="Bailly A."/>
            <person name="Yang H."/>
            <person name="Blakeslee J."/>
            <person name="Langowski L."/>
            <person name="Nejedla E."/>
            <person name="Fujita H."/>
            <person name="Itoh H."/>
            <person name="Syono K."/>
            <person name="Hejatko J."/>
            <person name="Gray W.M."/>
            <person name="Martinoia E."/>
            <person name="Geisler M."/>
            <person name="Bartel B."/>
            <person name="Murphy A.S."/>
            <person name="Friml J."/>
        </authorList>
    </citation>
    <scope>FUNCTION</scope>
    <scope>DISRUPTION PHENOTYPE</scope>
    <scope>SUBCELLULAR LOCATION</scope>
    <scope>TISSUE SPECIFICITY</scope>
    <scope>DEVELOPMENTAL STAGE</scope>
    <source>
        <strain>cv. Columbia</strain>
    </source>
</reference>
<reference key="9">
    <citation type="journal article" date="2014" name="New Phytol.">
        <title>Involvement of the ABCG37 transporter in secretion of scopoletin and derivatives by Arabidopsis roots in response to iron deficiency.</title>
        <authorList>
            <person name="Fourcroy P."/>
            <person name="Siso-Terraza P."/>
            <person name="Sudre D."/>
            <person name="Saviron M."/>
            <person name="Reyt G."/>
            <person name="Gaymard F."/>
            <person name="Abadia A."/>
            <person name="Abadia J."/>
            <person name="Alvarez-Fernandez A."/>
            <person name="Briat J.-F."/>
        </authorList>
    </citation>
    <scope>FUNCTION</scope>
    <scope>DISRUPTION PHENOTYPE</scope>
    <scope>INDUCTION BY IRON DEFICIENCY</scope>
    <source>
        <strain>cv. Columbia</strain>
    </source>
</reference>
<reference key="10">
    <citation type="journal article" date="2015" name="Biochem. Soc. Trans.">
        <title>The role of ABCG-type ABC transporters in phytohormone transport.</title>
        <authorList>
            <person name="Borghi L."/>
            <person name="Kang J."/>
            <person name="Ko D."/>
            <person name="Lee Y."/>
            <person name="Martinoia E."/>
        </authorList>
    </citation>
    <scope>REVIEW ON PHYTOHORMONE TRANSPORT</scope>
</reference>
<reference key="11">
    <citation type="journal article" date="2017" name="Sci. Rep.">
        <title>Arabidopsis transporter ABCG37/PDR9 contributes primarily highly oxygenated coumarins to root exudation.</title>
        <authorList>
            <person name="Ziegler J."/>
            <person name="Schmidt S."/>
            <person name="Strehmel N."/>
            <person name="Scheel D."/>
            <person name="Abel S."/>
        </authorList>
    </citation>
    <scope>FUNCTION</scope>
    <scope>DISRUPTION PHENOTYPE</scope>
    <source>
        <strain>cv. Columbia</strain>
    </source>
</reference>
<sequence length="1450" mass="164106">MAHMVGADDIESLRVELAEIGRSIRSSFRRHTSSFRSSSSIYEVENDGDVNDHDAEYALQWAEIERLPTVKRMRSTLLDDGDESMTEKGRRVVDVTKLGAVERHLMIEKLIKHIENDNLKLLKKIRRRIDRVGMELPTIEVRYESLKVVAECEVVEGKALPTLWNTAKRVLSELVKLTGAKTHEAKINIINDVNGIIKPGRLTLLLGPPSCGKTTLLKALSGNLENNLKCSGEISYNGHRLDEFVPQKTSAYISQYDLHIAEMTVRETVDFSARCQGVGSRTDIMMEVSKREKEKGIIPDTEVDAYMKAISVEGLQRSLQTDYILKILGLDICAEILIGDVMRRGISGGQKKRLTTAEMIVGPTKALFMDEITNGLDSSTAFQIVKSLQQFAHISSATVLVSLLQPAPESYDLFDDIMLMAKGRIVYHGPRGEVLNFFEDCGFRCPERKGVADFLQEVISKKDQAQYWWHEDLPYSFVSVEMLSKKFKDLSIGKKIEDTLSKPYDRSKSHKDALSFSVYSLPNWELFIACISREYLLMKRNYFVYIFKTAQLVMAAFITMTVFIRTRMGIDIIHGNSYMSALFFALIILLVDGFPELSMTAQRLAVFYKQKQLCFYPAWAYAIPATVLKVPLSFFESLVWTCLSYYVIGYTPEASRFFKQFILLFAVHFTSISMFRCLAAIFQTVVASITAGSFGILFTFVFAGFVIPPPSMPAWLKWGFWANPLSYGEIGLSVNEFLAPRWNQMQPNNFTLGRTILQTRGMDYNGYMYWVSLCALLGFTVLFNIIFTLALTFLKSPTSSRAMISQDKLSELQGTEKSTEDSSVRKKTTDSPVKTEEEDKMVLPFKPLTVTFQDLNYFVDMPVEMRDQGYDQKKLQLLSDITGAFRPGILTALMGVSGAGKTTLLDVLAGRKTSGYIEGDIRISGFPKVQETFARVSGYCEQTDIHSPNITVEESVIYSAWLRLAPEIDATTKTKFVKQVLETIELDEIKDSLVGVTGVSGLSTEQRKRLTIAVELVANPSIIFMDEPTTGLDARAAAIVMRAVKNVADTGRTIVCTIHQPSIDIFEAFDELVLLKRGGRMIYTGPLGQHSRHIIEYFESVPEIPKIKDNHNPATWMLDVSSQSVEIELGVDFAKIYHDSALYKRNSELVKQLSQPDSGSSDIQFKRTFAQSWWGQFKSILWKMNLSYWRSPSYNLMRMMHTLVSSLIFGALFWKQGQNLDTQQSMFTVFGAIYGLVLFLGINNCASALQYFETERNVMYRERFAGMYSATAYALGQVVTEIPYIFIQAAEFVIVTYPMIGFYPSAYKVFWSLYSMFCSLLTFNYLAMFLVSITPNFMVAAILQSLFYVGFNLFSGFLIPQTQVPGWWIWLYYLTPTSWTLNGFISSQYGDIHEEINVFGQSTTVARFLKDYFGFHHDLLAVTAVVQIAFPIALASMFAFFVGKLNFQRR</sequence>
<gene>
    <name evidence="14" type="primary">ABCG37</name>
    <name evidence="13" type="synonym">ETA4</name>
    <name evidence="14" type="synonym">PDR12</name>
    <name evidence="11 12 13" type="synonym">PDR9</name>
    <name evidence="15" type="synonym">PIS1</name>
    <name evidence="18" type="ordered locus">At3g53480</name>
    <name evidence="19" type="ORF">F4P12.180</name>
</gene>
<accession>Q9LFH0</accession>
<keyword id="KW-0067">ATP-binding</keyword>
<keyword id="KW-0927">Auxin signaling pathway</keyword>
<keyword id="KW-1003">Cell membrane</keyword>
<keyword id="KW-0216">Detoxification</keyword>
<keyword id="KW-0472">Membrane</keyword>
<keyword id="KW-0547">Nucleotide-binding</keyword>
<keyword id="KW-1185">Reference proteome</keyword>
<keyword id="KW-0677">Repeat</keyword>
<keyword id="KW-0812">Transmembrane</keyword>
<keyword id="KW-1133">Transmembrane helix</keyword>
<keyword id="KW-0813">Transport</keyword>
<organism>
    <name type="scientific">Arabidopsis thaliana</name>
    <name type="common">Mouse-ear cress</name>
    <dbReference type="NCBI Taxonomy" id="3702"/>
    <lineage>
        <taxon>Eukaryota</taxon>
        <taxon>Viridiplantae</taxon>
        <taxon>Streptophyta</taxon>
        <taxon>Embryophyta</taxon>
        <taxon>Tracheophyta</taxon>
        <taxon>Spermatophyta</taxon>
        <taxon>Magnoliopsida</taxon>
        <taxon>eudicotyledons</taxon>
        <taxon>Gunneridae</taxon>
        <taxon>Pentapetalae</taxon>
        <taxon>rosids</taxon>
        <taxon>malvids</taxon>
        <taxon>Brassicales</taxon>
        <taxon>Brassicaceae</taxon>
        <taxon>Camelineae</taxon>
        <taxon>Arabidopsis</taxon>
    </lineage>
</organism>
<feature type="chain" id="PRO_0000234636" description="ABC transporter G family member 37">
    <location>
        <begin position="1"/>
        <end position="1450"/>
    </location>
</feature>
<feature type="transmembrane region" description="Helical" evidence="2">
    <location>
        <begin position="544"/>
        <end position="564"/>
    </location>
</feature>
<feature type="transmembrane region" description="Helical" evidence="2">
    <location>
        <begin position="581"/>
        <end position="601"/>
    </location>
</feature>
<feature type="transmembrane region" description="Helical" evidence="2">
    <location>
        <begin position="615"/>
        <end position="635"/>
    </location>
</feature>
<feature type="transmembrane region" description="Helical" evidence="2">
    <location>
        <begin position="661"/>
        <end position="681"/>
    </location>
</feature>
<feature type="transmembrane region" description="Helical" evidence="2">
    <location>
        <begin position="687"/>
        <end position="707"/>
    </location>
</feature>
<feature type="transmembrane region" description="Helical" evidence="2">
    <location>
        <begin position="773"/>
        <end position="793"/>
    </location>
</feature>
<feature type="transmembrane region" description="Helical" evidence="2">
    <location>
        <begin position="1194"/>
        <end position="1214"/>
    </location>
</feature>
<feature type="transmembrane region" description="Helical" evidence="2">
    <location>
        <begin position="1226"/>
        <end position="1246"/>
    </location>
</feature>
<feature type="transmembrane region" description="Helical" evidence="2">
    <location>
        <begin position="1282"/>
        <end position="1302"/>
    </location>
</feature>
<feature type="transmembrane region" description="Helical" evidence="2">
    <location>
        <begin position="1313"/>
        <end position="1333"/>
    </location>
</feature>
<feature type="transmembrane region" description="Helical" evidence="2">
    <location>
        <begin position="1339"/>
        <end position="1359"/>
    </location>
</feature>
<feature type="transmembrane region" description="Helical" evidence="2">
    <location>
        <begin position="1365"/>
        <end position="1385"/>
    </location>
</feature>
<feature type="transmembrane region" description="Helical" evidence="2">
    <location>
        <begin position="1422"/>
        <end position="1442"/>
    </location>
</feature>
<feature type="domain" description="ABC transporter 1" evidence="3">
    <location>
        <begin position="175"/>
        <end position="447"/>
    </location>
</feature>
<feature type="domain" description="ABC transmembrane type-2 1" evidence="2">
    <location>
        <begin position="525"/>
        <end position="737"/>
    </location>
</feature>
<feature type="domain" description="ABC transporter 2" evidence="3">
    <location>
        <begin position="850"/>
        <end position="1103"/>
    </location>
</feature>
<feature type="domain" description="ABC transmembrane type-2 2" evidence="2">
    <location>
        <begin position="1175"/>
        <end position="1389"/>
    </location>
</feature>
<feature type="region of interest" description="Disordered" evidence="4">
    <location>
        <begin position="810"/>
        <end position="838"/>
    </location>
</feature>
<feature type="compositionally biased region" description="Basic and acidic residues" evidence="4">
    <location>
        <begin position="817"/>
        <end position="838"/>
    </location>
</feature>
<feature type="binding site" evidence="3">
    <location>
        <begin position="207"/>
        <end position="214"/>
    </location>
    <ligand>
        <name>ATP</name>
        <dbReference type="ChEBI" id="CHEBI:30616"/>
        <label>1</label>
    </ligand>
</feature>
<feature type="binding site" evidence="3">
    <location>
        <begin position="895"/>
        <end position="902"/>
    </location>
    <ligand>
        <name>ATP</name>
        <dbReference type="ChEBI" id="CHEBI:30616"/>
        <label>2</label>
    </ligand>
</feature>
<feature type="mutagenesis site" description="In pdr9-1 and eta4; gain of function, probably increasing protein stability, which leads to an enhanced tolerance to the auxinic herbicides 2,4-dichlorophenoxyacetic acid (2,4-D),4-chlorophenoxyacetic acid (4-CPA), 4-chloro-2-methylphenoxy acetic acid (MCPA), 2,4,5-trichlorophenoxyacetic acid (2,4,5-T), 4,5-Cl(2)-IAA and slighty to 4-Cl-IAA, but normal responses to the endogenous auxins indole-3-acetic acid (IAA), naphthylacetic acid (NAA) and indole-butyric acid (IBA)." evidence="6">
    <original>A</original>
    <variation>T</variation>
    <location>
        <position position="1034"/>
    </location>
</feature>
<name>AB37G_ARATH</name>
<proteinExistence type="evidence at protein level"/>